<name>KCY_CALBD</name>
<feature type="chain" id="PRO_1000125269" description="Cytidylate kinase">
    <location>
        <begin position="1"/>
        <end position="226"/>
    </location>
</feature>
<feature type="binding site" evidence="1">
    <location>
        <begin position="10"/>
        <end position="18"/>
    </location>
    <ligand>
        <name>ATP</name>
        <dbReference type="ChEBI" id="CHEBI:30616"/>
    </ligand>
</feature>
<comment type="catalytic activity">
    <reaction evidence="1">
        <text>CMP + ATP = CDP + ADP</text>
        <dbReference type="Rhea" id="RHEA:11600"/>
        <dbReference type="ChEBI" id="CHEBI:30616"/>
        <dbReference type="ChEBI" id="CHEBI:58069"/>
        <dbReference type="ChEBI" id="CHEBI:60377"/>
        <dbReference type="ChEBI" id="CHEBI:456216"/>
        <dbReference type="EC" id="2.7.4.25"/>
    </reaction>
</comment>
<comment type="catalytic activity">
    <reaction evidence="1">
        <text>dCMP + ATP = dCDP + ADP</text>
        <dbReference type="Rhea" id="RHEA:25094"/>
        <dbReference type="ChEBI" id="CHEBI:30616"/>
        <dbReference type="ChEBI" id="CHEBI:57566"/>
        <dbReference type="ChEBI" id="CHEBI:58593"/>
        <dbReference type="ChEBI" id="CHEBI:456216"/>
        <dbReference type="EC" id="2.7.4.25"/>
    </reaction>
</comment>
<comment type="subcellular location">
    <subcellularLocation>
        <location evidence="1">Cytoplasm</location>
    </subcellularLocation>
</comment>
<comment type="similarity">
    <text evidence="1">Belongs to the cytidylate kinase family. Type 1 subfamily.</text>
</comment>
<proteinExistence type="inferred from homology"/>
<protein>
    <recommendedName>
        <fullName evidence="1">Cytidylate kinase</fullName>
        <shortName evidence="1">CK</shortName>
        <ecNumber evidence="1">2.7.4.25</ecNumber>
    </recommendedName>
    <alternativeName>
        <fullName evidence="1">Cytidine monophosphate kinase</fullName>
        <shortName evidence="1">CMP kinase</shortName>
    </alternativeName>
</protein>
<gene>
    <name evidence="1" type="primary">cmk</name>
    <name type="ordered locus">Athe_1325</name>
</gene>
<accession>B9MRX1</accession>
<reference key="1">
    <citation type="submission" date="2009-01" db="EMBL/GenBank/DDBJ databases">
        <title>Complete sequence of chromosome of Caldicellulosiruptor becscii DSM 6725.</title>
        <authorList>
            <person name="Lucas S."/>
            <person name="Copeland A."/>
            <person name="Lapidus A."/>
            <person name="Glavina del Rio T."/>
            <person name="Tice H."/>
            <person name="Bruce D."/>
            <person name="Goodwin L."/>
            <person name="Pitluck S."/>
            <person name="Sims D."/>
            <person name="Meincke L."/>
            <person name="Brettin T."/>
            <person name="Detter J.C."/>
            <person name="Han C."/>
            <person name="Larimer F."/>
            <person name="Land M."/>
            <person name="Hauser L."/>
            <person name="Kyrpides N."/>
            <person name="Ovchinnikova G."/>
            <person name="Kataeva I."/>
            <person name="Adams M.W.W."/>
        </authorList>
    </citation>
    <scope>NUCLEOTIDE SEQUENCE [LARGE SCALE GENOMIC DNA]</scope>
    <source>
        <strain>ATCC BAA-1888 / DSM 6725 / KCTC 15123 / Z-1320</strain>
    </source>
</reference>
<organism>
    <name type="scientific">Caldicellulosiruptor bescii (strain ATCC BAA-1888 / DSM 6725 / KCTC 15123 / Z-1320)</name>
    <name type="common">Anaerocellum thermophilum</name>
    <dbReference type="NCBI Taxonomy" id="521460"/>
    <lineage>
        <taxon>Bacteria</taxon>
        <taxon>Bacillati</taxon>
        <taxon>Bacillota</taxon>
        <taxon>Bacillota incertae sedis</taxon>
        <taxon>Caldicellulosiruptorales</taxon>
        <taxon>Caldicellulosiruptoraceae</taxon>
        <taxon>Caldicellulosiruptor</taxon>
    </lineage>
</organism>
<evidence type="ECO:0000255" key="1">
    <source>
        <dbReference type="HAMAP-Rule" id="MF_00238"/>
    </source>
</evidence>
<keyword id="KW-0067">ATP-binding</keyword>
<keyword id="KW-0963">Cytoplasm</keyword>
<keyword id="KW-0418">Kinase</keyword>
<keyword id="KW-0547">Nucleotide-binding</keyword>
<keyword id="KW-0808">Transferase</keyword>
<dbReference type="EC" id="2.7.4.25" evidence="1"/>
<dbReference type="EMBL" id="CP001393">
    <property type="protein sequence ID" value="ACM60425.1"/>
    <property type="molecule type" value="Genomic_DNA"/>
</dbReference>
<dbReference type="RefSeq" id="WP_015907797.1">
    <property type="nucleotide sequence ID" value="NC_012034.1"/>
</dbReference>
<dbReference type="SMR" id="B9MRX1"/>
<dbReference type="STRING" id="521460.Athe_1325"/>
<dbReference type="GeneID" id="31772673"/>
<dbReference type="KEGG" id="ate:Athe_1325"/>
<dbReference type="eggNOG" id="COG0283">
    <property type="taxonomic scope" value="Bacteria"/>
</dbReference>
<dbReference type="HOGENOM" id="CLU_079959_0_2_9"/>
<dbReference type="Proteomes" id="UP000007723">
    <property type="component" value="Chromosome"/>
</dbReference>
<dbReference type="GO" id="GO:0005829">
    <property type="term" value="C:cytosol"/>
    <property type="evidence" value="ECO:0007669"/>
    <property type="project" value="TreeGrafter"/>
</dbReference>
<dbReference type="GO" id="GO:0005524">
    <property type="term" value="F:ATP binding"/>
    <property type="evidence" value="ECO:0007669"/>
    <property type="project" value="UniProtKB-UniRule"/>
</dbReference>
<dbReference type="GO" id="GO:0036430">
    <property type="term" value="F:CMP kinase activity"/>
    <property type="evidence" value="ECO:0007669"/>
    <property type="project" value="RHEA"/>
</dbReference>
<dbReference type="GO" id="GO:0036431">
    <property type="term" value="F:dCMP kinase activity"/>
    <property type="evidence" value="ECO:0007669"/>
    <property type="project" value="RHEA"/>
</dbReference>
<dbReference type="GO" id="GO:0015949">
    <property type="term" value="P:nucleobase-containing small molecule interconversion"/>
    <property type="evidence" value="ECO:0007669"/>
    <property type="project" value="TreeGrafter"/>
</dbReference>
<dbReference type="GO" id="GO:0006220">
    <property type="term" value="P:pyrimidine nucleotide metabolic process"/>
    <property type="evidence" value="ECO:0007669"/>
    <property type="project" value="UniProtKB-UniRule"/>
</dbReference>
<dbReference type="CDD" id="cd02020">
    <property type="entry name" value="CMPK"/>
    <property type="match status" value="1"/>
</dbReference>
<dbReference type="Gene3D" id="3.40.50.300">
    <property type="entry name" value="P-loop containing nucleotide triphosphate hydrolases"/>
    <property type="match status" value="1"/>
</dbReference>
<dbReference type="HAMAP" id="MF_00238">
    <property type="entry name" value="Cytidyl_kinase_type1"/>
    <property type="match status" value="1"/>
</dbReference>
<dbReference type="InterPro" id="IPR003136">
    <property type="entry name" value="Cytidylate_kin"/>
</dbReference>
<dbReference type="InterPro" id="IPR011994">
    <property type="entry name" value="Cytidylate_kinase_dom"/>
</dbReference>
<dbReference type="InterPro" id="IPR027417">
    <property type="entry name" value="P-loop_NTPase"/>
</dbReference>
<dbReference type="NCBIfam" id="TIGR00017">
    <property type="entry name" value="cmk"/>
    <property type="match status" value="1"/>
</dbReference>
<dbReference type="PANTHER" id="PTHR21299:SF2">
    <property type="entry name" value="CYTIDYLATE KINASE"/>
    <property type="match status" value="1"/>
</dbReference>
<dbReference type="PANTHER" id="PTHR21299">
    <property type="entry name" value="CYTIDYLATE KINASE/PANTOATE-BETA-ALANINE LIGASE"/>
    <property type="match status" value="1"/>
</dbReference>
<dbReference type="Pfam" id="PF02224">
    <property type="entry name" value="Cytidylate_kin"/>
    <property type="match status" value="1"/>
</dbReference>
<dbReference type="SUPFAM" id="SSF52540">
    <property type="entry name" value="P-loop containing nucleoside triphosphate hydrolases"/>
    <property type="match status" value="1"/>
</dbReference>
<sequence>MKKINIAIDGPAGAGKSTISKLLASQLGYIHIDTGAMYRAVGLKVLKNNISPHDRKKIVEILNSTDIQIKLVDGRQLVFLDGEDVTEKIRQPEVSMYASDVSKIREVRERLVKMQQELAKQKGVIMDGRDIGTHVLPNAELKIFLTATAEERAKRRFLELKQKGYDVDYYQLLDEIKKRDQNDMTREFAPLRVAEDAIVIDSTSLSIEEVLQKVLELFYKVVKNEV</sequence>